<feature type="signal peptide" evidence="1">
    <location>
        <begin position="1"/>
        <end position="19"/>
    </location>
</feature>
<feature type="chain" id="PRO_0000036740" description="Protein MGF 110-9L">
    <location>
        <begin position="20"/>
        <end position="290"/>
    </location>
</feature>
<feature type="transmembrane region" description="Helical" evidence="1">
    <location>
        <begin position="128"/>
        <end position="148"/>
    </location>
</feature>
<feature type="transmembrane region" description="Helical" evidence="1">
    <location>
        <begin position="163"/>
        <end position="183"/>
    </location>
</feature>
<feature type="repeat" description="A">
    <location>
        <begin position="1"/>
        <end position="160"/>
    </location>
</feature>
<feature type="repeat" description="B">
    <location>
        <begin position="161"/>
        <end position="290"/>
    </location>
</feature>
<organismHost>
    <name type="scientific">Ornithodoros</name>
    <name type="common">relapsing fever ticks</name>
    <dbReference type="NCBI Taxonomy" id="6937"/>
</organismHost>
<organismHost>
    <name type="scientific">Sus scrofa</name>
    <name type="common">Pig</name>
    <dbReference type="NCBI Taxonomy" id="9823"/>
</organismHost>
<reference key="1">
    <citation type="journal article" date="1990" name="Virology">
        <title>Genetic variation and multigene families in African swine fever virus.</title>
        <authorList>
            <person name="de la Vega I."/>
            <person name="Vinuela E."/>
            <person name="Blasco R."/>
        </authorList>
    </citation>
    <scope>NUCLEOTIDE SEQUENCE [GENOMIC DNA]</scope>
</reference>
<accession>P26710</accession>
<name>1109L_ASFL5</name>
<comment type="subcellular location">
    <subcellularLocation>
        <location evidence="1">Membrane</location>
        <topology evidence="1">Multi-pass membrane protein</topology>
    </subcellularLocation>
</comment>
<comment type="similarity">
    <text evidence="2">Belongs to the asfivirus MGF 110 family.</text>
</comment>
<dbReference type="EMBL" id="M58155">
    <property type="protein sequence ID" value="AAA42713.1"/>
    <property type="molecule type" value="Genomic_DNA"/>
</dbReference>
<dbReference type="PIR" id="G45348">
    <property type="entry name" value="G45348"/>
</dbReference>
<dbReference type="GO" id="GO:0016020">
    <property type="term" value="C:membrane"/>
    <property type="evidence" value="ECO:0007669"/>
    <property type="project" value="UniProtKB-SubCell"/>
</dbReference>
<dbReference type="InterPro" id="IPR004848">
    <property type="entry name" value="ASFV_fam_110"/>
</dbReference>
<dbReference type="Pfam" id="PF01639">
    <property type="entry name" value="v110"/>
    <property type="match status" value="2"/>
</dbReference>
<keyword id="KW-0244">Early protein</keyword>
<keyword id="KW-0472">Membrane</keyword>
<keyword id="KW-0677">Repeat</keyword>
<keyword id="KW-0732">Signal</keyword>
<keyword id="KW-0812">Transmembrane</keyword>
<keyword id="KW-1133">Transmembrane helix</keyword>
<proteinExistence type="inferred from homology"/>
<protein>
    <recommendedName>
        <fullName>Protein MGF 110-9L</fullName>
    </recommendedName>
</protein>
<evidence type="ECO:0000255" key="1"/>
<evidence type="ECO:0000305" key="2"/>
<sequence>MKVIVLLLVLAVMQPVIQSQPFPGTEELPMTRRPPKGELEYWCTYAKSCDFCWNCRHGICKNKVFEKHPLIKKNDYIQICRVSRYNNRCSYFTDSRIRRFHIMSCTNPTYYDWFDELMQVKEDRVIDVENIKHTCLCMIATIALIGYVRKQYSRMRMQAATRLLIFLGLYVLLGILMTNIIMNLPLSTDNPMQMRRPPERDLKFWCTYAKHCDFCWTCKDGMCKNKVFSDHPIITQNDYIVNCTVSRWHDRCMYEAHFRIHYQHNMNCSQPKDLEWFIELKRHVINQDDL</sequence>
<gene>
    <name type="ORF">LIS290</name>
</gene>
<organism>
    <name type="scientific">African swine fever virus (isolate Portugal/Lis 57/1957)</name>
    <name type="common">ASFV</name>
    <dbReference type="NCBI Taxonomy" id="10499"/>
    <lineage>
        <taxon>Viruses</taxon>
        <taxon>Varidnaviria</taxon>
        <taxon>Bamfordvirae</taxon>
        <taxon>Nucleocytoviricota</taxon>
        <taxon>Pokkesviricetes</taxon>
        <taxon>Asfuvirales</taxon>
        <taxon>Asfarviridae</taxon>
        <taxon>Asfivirus</taxon>
        <taxon>African swine fever virus</taxon>
    </lineage>
</organism>